<gene>
    <name evidence="5" type="primary">TMN6</name>
    <name evidence="6" type="synonym">EMP4</name>
    <name evidence="8" type="ordered locus">At1g55130</name>
    <name evidence="9" type="ORF">T7N22.7</name>
</gene>
<accession>Q9C720</accession>
<accession>Q84WT7</accession>
<proteinExistence type="evidence at transcript level"/>
<name>TMN6_ARATH</name>
<feature type="signal peptide" evidence="3">
    <location>
        <begin position="1"/>
        <end position="23"/>
    </location>
</feature>
<feature type="chain" id="PRO_0000431263" description="Transmembrane 9 superfamily member 6" evidence="3">
    <location>
        <begin position="24"/>
        <end position="637"/>
    </location>
</feature>
<feature type="topological domain" description="Lumenal" evidence="7">
    <location>
        <begin position="24"/>
        <end position="274"/>
    </location>
</feature>
<feature type="transmembrane region" description="Helical; Name=1" evidence="3">
    <location>
        <begin position="275"/>
        <end position="295"/>
    </location>
</feature>
<feature type="topological domain" description="Cytoplasmic" evidence="7">
    <location>
        <begin position="296"/>
        <end position="344"/>
    </location>
</feature>
<feature type="transmembrane region" description="Helical; Name=2" evidence="3">
    <location>
        <begin position="345"/>
        <end position="365"/>
    </location>
</feature>
<feature type="topological domain" description="Lumenal" evidence="7">
    <location>
        <begin position="366"/>
        <end position="370"/>
    </location>
</feature>
<feature type="transmembrane region" description="Helical; Name=3" evidence="3">
    <location>
        <begin position="371"/>
        <end position="391"/>
    </location>
</feature>
<feature type="topological domain" description="Cytoplasmic" evidence="7">
    <location>
        <begin position="392"/>
        <end position="411"/>
    </location>
</feature>
<feature type="transmembrane region" description="Helical; Name=4" evidence="3">
    <location>
        <begin position="412"/>
        <end position="432"/>
    </location>
</feature>
<feature type="topological domain" description="Lumenal" evidence="7">
    <location>
        <begin position="433"/>
        <end position="444"/>
    </location>
</feature>
<feature type="transmembrane region" description="Helical; Name=5" evidence="3">
    <location>
        <begin position="445"/>
        <end position="465"/>
    </location>
</feature>
<feature type="topological domain" description="Cytoplasmic" evidence="7">
    <location>
        <begin position="466"/>
        <end position="495"/>
    </location>
</feature>
<feature type="transmembrane region" description="Helical; Name=6" evidence="3">
    <location>
        <begin position="496"/>
        <end position="516"/>
    </location>
</feature>
<feature type="topological domain" description="Lumenal" evidence="7">
    <location>
        <begin position="517"/>
        <end position="527"/>
    </location>
</feature>
<feature type="transmembrane region" description="Helical; Name=7" evidence="3">
    <location>
        <begin position="528"/>
        <end position="548"/>
    </location>
</feature>
<feature type="topological domain" description="Cytoplasmic" evidence="7">
    <location>
        <begin position="549"/>
        <end position="565"/>
    </location>
</feature>
<feature type="transmembrane region" description="Helical; Name=8" evidence="3">
    <location>
        <begin position="566"/>
        <end position="586"/>
    </location>
</feature>
<feature type="topological domain" description="Lumenal" evidence="7">
    <location>
        <begin position="587"/>
        <end position="593"/>
    </location>
</feature>
<feature type="transmembrane region" description="Helical; Name=9" evidence="3">
    <location>
        <begin position="594"/>
        <end position="614"/>
    </location>
</feature>
<feature type="topological domain" description="Cytoplasmic" evidence="7">
    <location>
        <begin position="615"/>
        <end position="637"/>
    </location>
</feature>
<feature type="short sequence motif" description="Endoplasmic reticulum export signal" evidence="2">
    <location>
        <begin position="626"/>
        <end position="631"/>
    </location>
</feature>
<feature type="short sequence motif" description="Golgi retention signal" evidence="2">
    <location>
        <begin position="635"/>
        <end position="637"/>
    </location>
</feature>
<sequence length="637" mass="73623">MAIRIRISGTLLLSFLFFSTLHAFYLPGVAPRDFQKGDPLYVKVNKLSSTKTQLPYDFYYLNYCKPPKILNTGENLGEVLRGDRIENSVYTFEMLEDQPCRVGCRVRVDAESAKNFREKIDYEYRANMILDNLPVAVLRQRKDGIQSTTYEHGYRVGFKGSYEGSKEKKYFIHNHLSFRVMYHRDQESESSRIVGFEVTPNSVLHEYKEWDENNPQLTTCNKDTKNLIQSNTVPQEVEEGKEIVFTYDVAFKESVIKWASRWDTYLLMNDDQIHWFSIINSLMIVLFLSGMVAMIMMRTLYKDISNYNQLETQDEAQEETGWKLVHGDVFRTPMNSGLLCVYVGTGVQIFGMTLVTMIFALLGFLSPSNRGGLTTAMVLLWVFMGIFAGYSSSRLHKMFKGNEWKRITLKTAFMFPGILFAIFFVLNTLIWGERSSGAIPFSTMFALVCLWFGISVPLVFIGSYLGHKKPAIEDPVKTNKIPRQVPEQPWYMKPGFSILIGGILPFGAVFIELFFILTSIWLNQFYYIFGFLFIVFLILIVTCAEITIVLCYFQLCSEDYNWCWRAYLTSGSSSLYLFLYSVFYFFTKLEISKLVSGVLYFGYMIIISYSFFVLTGSIGFYACLWFVRKIYSSVKID</sequence>
<evidence type="ECO:0000250" key="1">
    <source>
        <dbReference type="UniProtKB" id="P32802"/>
    </source>
</evidence>
<evidence type="ECO:0000250" key="2">
    <source>
        <dbReference type="UniProtKB" id="Q940G0"/>
    </source>
</evidence>
<evidence type="ECO:0000255" key="3"/>
<evidence type="ECO:0000269" key="4">
    <source>
    </source>
</evidence>
<evidence type="ECO:0000303" key="5">
    <source>
    </source>
</evidence>
<evidence type="ECO:0000303" key="6">
    <source>
    </source>
</evidence>
<evidence type="ECO:0000305" key="7"/>
<evidence type="ECO:0000312" key="8">
    <source>
        <dbReference type="Araport" id="AT1G55130"/>
    </source>
</evidence>
<evidence type="ECO:0000312" key="9">
    <source>
        <dbReference type="EMBL" id="AAG50838.1"/>
    </source>
</evidence>
<protein>
    <recommendedName>
        <fullName evidence="7">Transmembrane 9 superfamily member 6</fullName>
    </recommendedName>
    <alternativeName>
        <fullName evidence="6">Endomembrane protein 4</fullName>
    </alternativeName>
    <alternativeName>
        <fullName evidence="5">Transmembrane nine protein 6</fullName>
        <shortName evidence="5">AtTMN6</shortName>
    </alternativeName>
</protein>
<comment type="subcellular location">
    <subcellularLocation>
        <location evidence="1">Endosome membrane</location>
        <topology evidence="3">Multi-pass membrane protein</topology>
    </subcellularLocation>
    <subcellularLocation>
        <location evidence="2">Golgi apparatus membrane</location>
        <topology evidence="3">Multi-pass membrane protein</topology>
    </subcellularLocation>
</comment>
<comment type="tissue specificity">
    <text evidence="4">Ubiquitous but weakly expressed in flowers and stems.</text>
</comment>
<comment type="domain">
    <text evidence="2">The C-terminal KXD/E motif functions as a Golgi retention signal, certainly through the binding to the COP1 coatomer.</text>
</comment>
<comment type="similarity">
    <text>Belongs to the nonaspanin (TM9SF) (TC 9.A.2) family.</text>
</comment>
<dbReference type="EMBL" id="AC073944">
    <property type="protein sequence ID" value="AAG50838.1"/>
    <property type="molecule type" value="Genomic_DNA"/>
</dbReference>
<dbReference type="EMBL" id="CP002684">
    <property type="protein sequence ID" value="AEE33189.1"/>
    <property type="molecule type" value="Genomic_DNA"/>
</dbReference>
<dbReference type="EMBL" id="BT002777">
    <property type="protein sequence ID" value="AAO22605.1"/>
    <property type="molecule type" value="mRNA"/>
</dbReference>
<dbReference type="PIR" id="H96592">
    <property type="entry name" value="H96592"/>
</dbReference>
<dbReference type="RefSeq" id="NP_175909.1">
    <property type="nucleotide sequence ID" value="NM_104386.3"/>
</dbReference>
<dbReference type="SMR" id="Q9C720"/>
<dbReference type="BioGRID" id="27181">
    <property type="interactions" value="2"/>
</dbReference>
<dbReference type="FunCoup" id="Q9C720">
    <property type="interactions" value="5278"/>
</dbReference>
<dbReference type="STRING" id="3702.Q9C720"/>
<dbReference type="PaxDb" id="3702-AT1G55130.1"/>
<dbReference type="ProteomicsDB" id="234433"/>
<dbReference type="EnsemblPlants" id="AT1G55130.1">
    <property type="protein sequence ID" value="AT1G55130.1"/>
    <property type="gene ID" value="AT1G55130"/>
</dbReference>
<dbReference type="GeneID" id="841956"/>
<dbReference type="Gramene" id="AT1G55130.1">
    <property type="protein sequence ID" value="AT1G55130.1"/>
    <property type="gene ID" value="AT1G55130"/>
</dbReference>
<dbReference type="KEGG" id="ath:AT1G55130"/>
<dbReference type="Araport" id="AT1G55130"/>
<dbReference type="TAIR" id="AT1G55130">
    <property type="gene designation" value="TMN6"/>
</dbReference>
<dbReference type="eggNOG" id="KOG1278">
    <property type="taxonomic scope" value="Eukaryota"/>
</dbReference>
<dbReference type="HOGENOM" id="CLU_010714_4_1_1"/>
<dbReference type="InParanoid" id="Q9C720"/>
<dbReference type="OMA" id="FRPPINC"/>
<dbReference type="OrthoDB" id="1666796at2759"/>
<dbReference type="PhylomeDB" id="Q9C720"/>
<dbReference type="PRO" id="PR:Q9C720"/>
<dbReference type="Proteomes" id="UP000006548">
    <property type="component" value="Chromosome 1"/>
</dbReference>
<dbReference type="ExpressionAtlas" id="Q9C720">
    <property type="expression patterns" value="baseline and differential"/>
</dbReference>
<dbReference type="GO" id="GO:0005768">
    <property type="term" value="C:endosome"/>
    <property type="evidence" value="ECO:0007005"/>
    <property type="project" value="TAIR"/>
</dbReference>
<dbReference type="GO" id="GO:0010008">
    <property type="term" value="C:endosome membrane"/>
    <property type="evidence" value="ECO:0007669"/>
    <property type="project" value="UniProtKB-SubCell"/>
</dbReference>
<dbReference type="GO" id="GO:0005794">
    <property type="term" value="C:Golgi apparatus"/>
    <property type="evidence" value="ECO:0007005"/>
    <property type="project" value="TAIR"/>
</dbReference>
<dbReference type="GO" id="GO:0000139">
    <property type="term" value="C:Golgi membrane"/>
    <property type="evidence" value="ECO:0007669"/>
    <property type="project" value="UniProtKB-SubCell"/>
</dbReference>
<dbReference type="GO" id="GO:0000138">
    <property type="term" value="C:Golgi trans cisterna"/>
    <property type="evidence" value="ECO:0007005"/>
    <property type="project" value="TAIR"/>
</dbReference>
<dbReference type="GO" id="GO:0005802">
    <property type="term" value="C:trans-Golgi network"/>
    <property type="evidence" value="ECO:0007005"/>
    <property type="project" value="TAIR"/>
</dbReference>
<dbReference type="InterPro" id="IPR004240">
    <property type="entry name" value="EMP70"/>
</dbReference>
<dbReference type="InterPro" id="IPR036259">
    <property type="entry name" value="MFS_trans_sf"/>
</dbReference>
<dbReference type="PANTHER" id="PTHR10766:SF111">
    <property type="entry name" value="TRANSMEMBRANE 9 SUPERFAMILY MEMBER 2"/>
    <property type="match status" value="1"/>
</dbReference>
<dbReference type="PANTHER" id="PTHR10766">
    <property type="entry name" value="TRANSMEMBRANE 9 SUPERFAMILY PROTEIN"/>
    <property type="match status" value="1"/>
</dbReference>
<dbReference type="Pfam" id="PF02990">
    <property type="entry name" value="EMP70"/>
    <property type="match status" value="1"/>
</dbReference>
<dbReference type="SUPFAM" id="SSF103473">
    <property type="entry name" value="MFS general substrate transporter"/>
    <property type="match status" value="1"/>
</dbReference>
<reference key="1">
    <citation type="journal article" date="2000" name="Nature">
        <title>Sequence and analysis of chromosome 1 of the plant Arabidopsis thaliana.</title>
        <authorList>
            <person name="Theologis A."/>
            <person name="Ecker J.R."/>
            <person name="Palm C.J."/>
            <person name="Federspiel N.A."/>
            <person name="Kaul S."/>
            <person name="White O."/>
            <person name="Alonso J."/>
            <person name="Altafi H."/>
            <person name="Araujo R."/>
            <person name="Bowman C.L."/>
            <person name="Brooks S.Y."/>
            <person name="Buehler E."/>
            <person name="Chan A."/>
            <person name="Chao Q."/>
            <person name="Chen H."/>
            <person name="Cheuk R.F."/>
            <person name="Chin C.W."/>
            <person name="Chung M.K."/>
            <person name="Conn L."/>
            <person name="Conway A.B."/>
            <person name="Conway A.R."/>
            <person name="Creasy T.H."/>
            <person name="Dewar K."/>
            <person name="Dunn P."/>
            <person name="Etgu P."/>
            <person name="Feldblyum T.V."/>
            <person name="Feng J.-D."/>
            <person name="Fong B."/>
            <person name="Fujii C.Y."/>
            <person name="Gill J.E."/>
            <person name="Goldsmith A.D."/>
            <person name="Haas B."/>
            <person name="Hansen N.F."/>
            <person name="Hughes B."/>
            <person name="Huizar L."/>
            <person name="Hunter J.L."/>
            <person name="Jenkins J."/>
            <person name="Johnson-Hopson C."/>
            <person name="Khan S."/>
            <person name="Khaykin E."/>
            <person name="Kim C.J."/>
            <person name="Koo H.L."/>
            <person name="Kremenetskaia I."/>
            <person name="Kurtz D.B."/>
            <person name="Kwan A."/>
            <person name="Lam B."/>
            <person name="Langin-Hooper S."/>
            <person name="Lee A."/>
            <person name="Lee J.M."/>
            <person name="Lenz C.A."/>
            <person name="Li J.H."/>
            <person name="Li Y.-P."/>
            <person name="Lin X."/>
            <person name="Liu S.X."/>
            <person name="Liu Z.A."/>
            <person name="Luros J.S."/>
            <person name="Maiti R."/>
            <person name="Marziali A."/>
            <person name="Militscher J."/>
            <person name="Miranda M."/>
            <person name="Nguyen M."/>
            <person name="Nierman W.C."/>
            <person name="Osborne B.I."/>
            <person name="Pai G."/>
            <person name="Peterson J."/>
            <person name="Pham P.K."/>
            <person name="Rizzo M."/>
            <person name="Rooney T."/>
            <person name="Rowley D."/>
            <person name="Sakano H."/>
            <person name="Salzberg S.L."/>
            <person name="Schwartz J.R."/>
            <person name="Shinn P."/>
            <person name="Southwick A.M."/>
            <person name="Sun H."/>
            <person name="Tallon L.J."/>
            <person name="Tambunga G."/>
            <person name="Toriumi M.J."/>
            <person name="Town C.D."/>
            <person name="Utterback T."/>
            <person name="Van Aken S."/>
            <person name="Vaysberg M."/>
            <person name="Vysotskaia V.S."/>
            <person name="Walker M."/>
            <person name="Wu D."/>
            <person name="Yu G."/>
            <person name="Fraser C.M."/>
            <person name="Venter J.C."/>
            <person name="Davis R.W."/>
        </authorList>
    </citation>
    <scope>NUCLEOTIDE SEQUENCE [LARGE SCALE GENOMIC DNA]</scope>
    <source>
        <strain>cv. Columbia</strain>
    </source>
</reference>
<reference key="2">
    <citation type="journal article" date="2017" name="Plant J.">
        <title>Araport11: a complete reannotation of the Arabidopsis thaliana reference genome.</title>
        <authorList>
            <person name="Cheng C.Y."/>
            <person name="Krishnakumar V."/>
            <person name="Chan A.P."/>
            <person name="Thibaud-Nissen F."/>
            <person name="Schobel S."/>
            <person name="Town C.D."/>
        </authorList>
    </citation>
    <scope>GENOME REANNOTATION</scope>
    <source>
        <strain>cv. Columbia</strain>
    </source>
</reference>
<reference key="3">
    <citation type="journal article" date="2003" name="Science">
        <title>Empirical analysis of transcriptional activity in the Arabidopsis genome.</title>
        <authorList>
            <person name="Yamada K."/>
            <person name="Lim J."/>
            <person name="Dale J.M."/>
            <person name="Chen H."/>
            <person name="Shinn P."/>
            <person name="Palm C.J."/>
            <person name="Southwick A.M."/>
            <person name="Wu H.C."/>
            <person name="Kim C.J."/>
            <person name="Nguyen M."/>
            <person name="Pham P.K."/>
            <person name="Cheuk R.F."/>
            <person name="Karlin-Newmann G."/>
            <person name="Liu S.X."/>
            <person name="Lam B."/>
            <person name="Sakano H."/>
            <person name="Wu T."/>
            <person name="Yu G."/>
            <person name="Miranda M."/>
            <person name="Quach H.L."/>
            <person name="Tripp M."/>
            <person name="Chang C.H."/>
            <person name="Lee J.M."/>
            <person name="Toriumi M.J."/>
            <person name="Chan M.M."/>
            <person name="Tang C.C."/>
            <person name="Onodera C.S."/>
            <person name="Deng J.M."/>
            <person name="Akiyama K."/>
            <person name="Ansari Y."/>
            <person name="Arakawa T."/>
            <person name="Banh J."/>
            <person name="Banno F."/>
            <person name="Bowser L."/>
            <person name="Brooks S.Y."/>
            <person name="Carninci P."/>
            <person name="Chao Q."/>
            <person name="Choy N."/>
            <person name="Enju A."/>
            <person name="Goldsmith A.D."/>
            <person name="Gurjal M."/>
            <person name="Hansen N.F."/>
            <person name="Hayashizaki Y."/>
            <person name="Johnson-Hopson C."/>
            <person name="Hsuan V.W."/>
            <person name="Iida K."/>
            <person name="Karnes M."/>
            <person name="Khan S."/>
            <person name="Koesema E."/>
            <person name="Ishida J."/>
            <person name="Jiang P.X."/>
            <person name="Jones T."/>
            <person name="Kawai J."/>
            <person name="Kamiya A."/>
            <person name="Meyers C."/>
            <person name="Nakajima M."/>
            <person name="Narusaka M."/>
            <person name="Seki M."/>
            <person name="Sakurai T."/>
            <person name="Satou M."/>
            <person name="Tamse R."/>
            <person name="Vaysberg M."/>
            <person name="Wallender E.K."/>
            <person name="Wong C."/>
            <person name="Yamamura Y."/>
            <person name="Yuan S."/>
            <person name="Shinozaki K."/>
            <person name="Davis R.W."/>
            <person name="Theologis A."/>
            <person name="Ecker J.R."/>
        </authorList>
    </citation>
    <scope>NUCLEOTIDE SEQUENCE [LARGE SCALE MRNA] OF 313-637</scope>
    <source>
        <strain>cv. Columbia</strain>
    </source>
</reference>
<reference key="4">
    <citation type="journal article" date="2010" name="Physiol. Plantarum">
        <title>Transmembrane nine proteins in yeast and Arabidopsis affect cellular metal contents without changing vacuolar morphology.</title>
        <authorList>
            <person name="Hegelund J.N."/>
            <person name="Jahn T.P."/>
            <person name="Baekgaard L."/>
            <person name="Palmgren M.G."/>
            <person name="Schjoerring J.K."/>
        </authorList>
    </citation>
    <scope>GENE FAMILY</scope>
    <scope>NOMENCLATURE</scope>
    <scope>TISSUE SPECIFICITY</scope>
</reference>
<reference key="5">
    <citation type="journal article" date="2012" name="Plant Cell">
        <title>The Golgi-localized Arabidopsis endomembrane protein12 contains both endoplasmic reticulum export and Golgi retention signals at its C terminus.</title>
        <authorList>
            <person name="Gao C."/>
            <person name="Yu C.K."/>
            <person name="Qu S."/>
            <person name="San M.W."/>
            <person name="Li K.Y."/>
            <person name="Lo S.W."/>
            <person name="Jiang L."/>
        </authorList>
    </citation>
    <scope>GENE FAMILY</scope>
    <scope>NOMENCLATURE</scope>
</reference>
<keyword id="KW-0967">Endosome</keyword>
<keyword id="KW-0333">Golgi apparatus</keyword>
<keyword id="KW-0472">Membrane</keyword>
<keyword id="KW-1185">Reference proteome</keyword>
<keyword id="KW-0732">Signal</keyword>
<keyword id="KW-0812">Transmembrane</keyword>
<keyword id="KW-1133">Transmembrane helix</keyword>
<organism>
    <name type="scientific">Arabidopsis thaliana</name>
    <name type="common">Mouse-ear cress</name>
    <dbReference type="NCBI Taxonomy" id="3702"/>
    <lineage>
        <taxon>Eukaryota</taxon>
        <taxon>Viridiplantae</taxon>
        <taxon>Streptophyta</taxon>
        <taxon>Embryophyta</taxon>
        <taxon>Tracheophyta</taxon>
        <taxon>Spermatophyta</taxon>
        <taxon>Magnoliopsida</taxon>
        <taxon>eudicotyledons</taxon>
        <taxon>Gunneridae</taxon>
        <taxon>Pentapetalae</taxon>
        <taxon>rosids</taxon>
        <taxon>malvids</taxon>
        <taxon>Brassicales</taxon>
        <taxon>Brassicaceae</taxon>
        <taxon>Camelineae</taxon>
        <taxon>Arabidopsis</taxon>
    </lineage>
</organism>